<name>NUSB_GLOVI</name>
<dbReference type="EMBL" id="BA000045">
    <property type="protein sequence ID" value="BAC89277.1"/>
    <property type="molecule type" value="Genomic_DNA"/>
</dbReference>
<dbReference type="RefSeq" id="NP_924282.1">
    <property type="nucleotide sequence ID" value="NC_005125.1"/>
</dbReference>
<dbReference type="RefSeq" id="WP_011141336.1">
    <property type="nucleotide sequence ID" value="NC_005125.1"/>
</dbReference>
<dbReference type="SMR" id="Q7NKZ0"/>
<dbReference type="FunCoup" id="Q7NKZ0">
    <property type="interactions" value="44"/>
</dbReference>
<dbReference type="STRING" id="251221.gene:10758819"/>
<dbReference type="EnsemblBacteria" id="BAC89277">
    <property type="protein sequence ID" value="BAC89277"/>
    <property type="gene ID" value="BAC89277"/>
</dbReference>
<dbReference type="KEGG" id="gvi:gll1336"/>
<dbReference type="PATRIC" id="fig|251221.4.peg.1362"/>
<dbReference type="eggNOG" id="COG0781">
    <property type="taxonomic scope" value="Bacteria"/>
</dbReference>
<dbReference type="HOGENOM" id="CLU_087843_0_0_3"/>
<dbReference type="InParanoid" id="Q7NKZ0"/>
<dbReference type="OrthoDB" id="3528057at2"/>
<dbReference type="PhylomeDB" id="Q7NKZ0"/>
<dbReference type="Proteomes" id="UP000000557">
    <property type="component" value="Chromosome"/>
</dbReference>
<dbReference type="GO" id="GO:0005829">
    <property type="term" value="C:cytosol"/>
    <property type="evidence" value="ECO:0000318"/>
    <property type="project" value="GO_Central"/>
</dbReference>
<dbReference type="GO" id="GO:0003723">
    <property type="term" value="F:RNA binding"/>
    <property type="evidence" value="ECO:0007669"/>
    <property type="project" value="UniProtKB-UniRule"/>
</dbReference>
<dbReference type="GO" id="GO:0006353">
    <property type="term" value="P:DNA-templated transcription termination"/>
    <property type="evidence" value="ECO:0007669"/>
    <property type="project" value="UniProtKB-UniRule"/>
</dbReference>
<dbReference type="GO" id="GO:0031564">
    <property type="term" value="P:transcription antitermination"/>
    <property type="evidence" value="ECO:0007669"/>
    <property type="project" value="UniProtKB-KW"/>
</dbReference>
<dbReference type="Gene3D" id="1.10.940.10">
    <property type="entry name" value="NusB-like"/>
    <property type="match status" value="1"/>
</dbReference>
<dbReference type="HAMAP" id="MF_00073">
    <property type="entry name" value="NusB"/>
    <property type="match status" value="1"/>
</dbReference>
<dbReference type="InterPro" id="IPR035926">
    <property type="entry name" value="NusB-like_sf"/>
</dbReference>
<dbReference type="InterPro" id="IPR011605">
    <property type="entry name" value="NusB_fam"/>
</dbReference>
<dbReference type="InterPro" id="IPR006027">
    <property type="entry name" value="NusB_RsmB_TIM44"/>
</dbReference>
<dbReference type="NCBIfam" id="TIGR01951">
    <property type="entry name" value="nusB"/>
    <property type="match status" value="1"/>
</dbReference>
<dbReference type="PANTHER" id="PTHR11078:SF3">
    <property type="entry name" value="ANTITERMINATION NUSB DOMAIN-CONTAINING PROTEIN"/>
    <property type="match status" value="1"/>
</dbReference>
<dbReference type="PANTHER" id="PTHR11078">
    <property type="entry name" value="N UTILIZATION SUBSTANCE PROTEIN B-RELATED"/>
    <property type="match status" value="1"/>
</dbReference>
<dbReference type="Pfam" id="PF01029">
    <property type="entry name" value="NusB"/>
    <property type="match status" value="1"/>
</dbReference>
<dbReference type="SUPFAM" id="SSF48013">
    <property type="entry name" value="NusB-like"/>
    <property type="match status" value="1"/>
</dbReference>
<accession>Q7NKZ0</accession>
<comment type="function">
    <text evidence="1">Involved in transcription antitermination. Required for transcription of ribosomal RNA (rRNA) genes. Binds specifically to the boxA antiterminator sequence of the ribosomal RNA (rrn) operons.</text>
</comment>
<comment type="similarity">
    <text evidence="1">Belongs to the NusB family.</text>
</comment>
<proteinExistence type="inferred from homology"/>
<protein>
    <recommendedName>
        <fullName evidence="1">Transcription antitermination protein NusB</fullName>
    </recommendedName>
    <alternativeName>
        <fullName evidence="1">Antitermination factor NusB</fullName>
    </alternativeName>
</protein>
<feature type="chain" id="PRO_0000176541" description="Transcription antitermination protein NusB">
    <location>
        <begin position="1"/>
        <end position="211"/>
    </location>
</feature>
<keyword id="KW-1185">Reference proteome</keyword>
<keyword id="KW-0694">RNA-binding</keyword>
<keyword id="KW-0804">Transcription</keyword>
<keyword id="KW-0889">Transcription antitermination</keyword>
<keyword id="KW-0805">Transcription regulation</keyword>
<sequence>MQARRIARELALMSIGQMPADRSRLQAKNLEELVLASVRTLREEANESLQRACTELRQGHNRLEASELTAPTVEAARREVAAAIALAEQAINRVGASLELPEFVRLADELQVRAYAFELLGAFVREGDNLDKLLDTCMEGWQVERLTRIDRDILRLALVEMVELKSVPFRVAIDEAVELAKKYSTDTAVRFINGVLRRVVQHLQLEQRPRR</sequence>
<reference key="1">
    <citation type="journal article" date="2003" name="DNA Res.">
        <title>Complete genome structure of Gloeobacter violaceus PCC 7421, a cyanobacterium that lacks thylakoids.</title>
        <authorList>
            <person name="Nakamura Y."/>
            <person name="Kaneko T."/>
            <person name="Sato S."/>
            <person name="Mimuro M."/>
            <person name="Miyashita H."/>
            <person name="Tsuchiya T."/>
            <person name="Sasamoto S."/>
            <person name="Watanabe A."/>
            <person name="Kawashima K."/>
            <person name="Kishida Y."/>
            <person name="Kiyokawa C."/>
            <person name="Kohara M."/>
            <person name="Matsumoto M."/>
            <person name="Matsuno A."/>
            <person name="Nakazaki N."/>
            <person name="Shimpo S."/>
            <person name="Takeuchi C."/>
            <person name="Yamada M."/>
            <person name="Tabata S."/>
        </authorList>
    </citation>
    <scope>NUCLEOTIDE SEQUENCE [LARGE SCALE GENOMIC DNA]</scope>
    <source>
        <strain>ATCC 29082 / PCC 7421</strain>
    </source>
</reference>
<organism>
    <name type="scientific">Gloeobacter violaceus (strain ATCC 29082 / PCC 7421)</name>
    <dbReference type="NCBI Taxonomy" id="251221"/>
    <lineage>
        <taxon>Bacteria</taxon>
        <taxon>Bacillati</taxon>
        <taxon>Cyanobacteriota</taxon>
        <taxon>Cyanophyceae</taxon>
        <taxon>Gloeobacterales</taxon>
        <taxon>Gloeobacteraceae</taxon>
        <taxon>Gloeobacter</taxon>
    </lineage>
</organism>
<gene>
    <name evidence="1" type="primary">nusB</name>
    <name type="ordered locus">gll1336</name>
</gene>
<evidence type="ECO:0000255" key="1">
    <source>
        <dbReference type="HAMAP-Rule" id="MF_00073"/>
    </source>
</evidence>